<reference key="1">
    <citation type="journal article" date="2007" name="Plant Cell">
        <title>Dothideomycete-plant interactions illuminated by genome sequencing and EST analysis of the wheat pathogen Stagonospora nodorum.</title>
        <authorList>
            <person name="Hane J.K."/>
            <person name="Lowe R.G.T."/>
            <person name="Solomon P.S."/>
            <person name="Tan K.-C."/>
            <person name="Schoch C.L."/>
            <person name="Spatafora J.W."/>
            <person name="Crous P.W."/>
            <person name="Kodira C.D."/>
            <person name="Birren B.W."/>
            <person name="Galagan J.E."/>
            <person name="Torriani S.F.F."/>
            <person name="McDonald B.A."/>
            <person name="Oliver R.P."/>
        </authorList>
    </citation>
    <scope>NUCLEOTIDE SEQUENCE [LARGE SCALE GENOMIC DNA]</scope>
    <source>
        <strain>SN15 / ATCC MYA-4574 / FGSC 10173</strain>
    </source>
</reference>
<organism>
    <name type="scientific">Phaeosphaeria nodorum (strain SN15 / ATCC MYA-4574 / FGSC 10173)</name>
    <name type="common">Glume blotch fungus</name>
    <name type="synonym">Parastagonospora nodorum</name>
    <dbReference type="NCBI Taxonomy" id="321614"/>
    <lineage>
        <taxon>Eukaryota</taxon>
        <taxon>Fungi</taxon>
        <taxon>Dikarya</taxon>
        <taxon>Ascomycota</taxon>
        <taxon>Pezizomycotina</taxon>
        <taxon>Dothideomycetes</taxon>
        <taxon>Pleosporomycetidae</taxon>
        <taxon>Pleosporales</taxon>
        <taxon>Pleosporineae</taxon>
        <taxon>Phaeosphaeriaceae</taxon>
        <taxon>Parastagonospora</taxon>
    </lineage>
</organism>
<comment type="function">
    <text evidence="1">Acts as a component of the peripheral membrane COG complex that is involved in intra-Golgi protein trafficking. COG is located at the cis-Golgi, and regulates tethering of retrograde intra-Golgi vesicles and possibly a number of other membrane trafficking events (By similarity).</text>
</comment>
<comment type="subcellular location">
    <subcellularLocation>
        <location evidence="1">Golgi apparatus membrane</location>
        <topology evidence="1">Peripheral membrane protein</topology>
    </subcellularLocation>
</comment>
<comment type="similarity">
    <text evidence="3">Belongs to the COG6 family.</text>
</comment>
<protein>
    <recommendedName>
        <fullName>Conserved oligomeric Golgi complex subunit 6</fullName>
        <shortName>COG complex subunit 6</shortName>
    </recommendedName>
    <alternativeName>
        <fullName>Component of oligomeric Golgi complex 6</fullName>
    </alternativeName>
</protein>
<sequence length="694" mass="77068">MSVSYFQERGTPASGDVLSPATTSLGGASRGANALSSRITSVLSASYADLEIRDALETLDTRGVRNTAETRRQIRLDVQKEVIECNGEIVKDFGQVAEQLKRIGTAISSLNSYCADMRSHIAAANKETGPVLEEATGLINQRKQVESKQQILQAFNSHFLISDEEATVLTSTAEPVNEEFFQVLTRVKKIHHDCQVLLGTEDQRLGLEILEQSSKQLNAAFQKLYRWIQREFKTLDLENPQISASVRRSLRVLAERPTLFQSCLDSFAEARESILSDSFHSALTGSASDAEHIATKPIEFQAHDPLRYVGDMLAWVHSTTVSEREALENLFISDGDEIKRSIQEGLESEPWLKDEEAEIFDGRKALSQLVGRDLASVARVLRQRTEQVVQSHDDATLAYKIANLIGFYKGMFAKLLGTDSDVLEVFTTLEASAMRQFRANMRDYVAAVQSDIAVPPQDLSPPDFLDDALQTLKVLAKSYDTSSAGAEDQEQGFQAVLAEALDPFMSGCVNLQKGLQQPDSAVFAINCLFAAKDVLSAFTFASERVEEMEDTISEQVAQLVDYQHEYLLHESGLATLLEALEPITDDEESLKTIPELEPFKRDALVAASQQLDEFLPSALIDAAENLKRLKNRKMIQDITEEAAASFCEDFEVVESKIIAADDLTYDEDKEDEEQEPGLRDLFPRTSGEIRVLLS</sequence>
<evidence type="ECO:0000250" key="1"/>
<evidence type="ECO:0000256" key="2">
    <source>
        <dbReference type="SAM" id="MobiDB-lite"/>
    </source>
</evidence>
<evidence type="ECO:0000305" key="3"/>
<name>COG6_PHANO</name>
<proteinExistence type="inferred from homology"/>
<feature type="chain" id="PRO_0000339327" description="Conserved oligomeric Golgi complex subunit 6">
    <location>
        <begin position="1"/>
        <end position="694"/>
    </location>
</feature>
<feature type="region of interest" description="Disordered" evidence="2">
    <location>
        <begin position="1"/>
        <end position="20"/>
    </location>
</feature>
<dbReference type="EMBL" id="CH445328">
    <property type="protein sequence ID" value="EAT89882.1"/>
    <property type="molecule type" value="Genomic_DNA"/>
</dbReference>
<dbReference type="RefSeq" id="XP_001793732.1">
    <property type="nucleotide sequence ID" value="XM_001793680.1"/>
</dbReference>
<dbReference type="SMR" id="Q0UYL3"/>
<dbReference type="FunCoup" id="Q0UYL3">
    <property type="interactions" value="238"/>
</dbReference>
<dbReference type="STRING" id="321614.Q0UYL3"/>
<dbReference type="EnsemblFungi" id="SNOT_03151">
    <property type="protein sequence ID" value="SNOT_03151"/>
    <property type="gene ID" value="SNOG_03151"/>
</dbReference>
<dbReference type="GeneID" id="5970589"/>
<dbReference type="KEGG" id="pno:SNOG_03151"/>
<dbReference type="VEuPathDB" id="FungiDB:JI435_031510"/>
<dbReference type="eggNOG" id="KOG3758">
    <property type="taxonomic scope" value="Eukaryota"/>
</dbReference>
<dbReference type="HOGENOM" id="CLU_011361_1_0_1"/>
<dbReference type="InParanoid" id="Q0UYL3"/>
<dbReference type="OMA" id="HSCLDFF"/>
<dbReference type="OrthoDB" id="272987at2759"/>
<dbReference type="Proteomes" id="UP000001055">
    <property type="component" value="Unassembled WGS sequence"/>
</dbReference>
<dbReference type="GO" id="GO:0000139">
    <property type="term" value="C:Golgi membrane"/>
    <property type="evidence" value="ECO:0007669"/>
    <property type="project" value="UniProtKB-SubCell"/>
</dbReference>
<dbReference type="GO" id="GO:0017119">
    <property type="term" value="C:Golgi transport complex"/>
    <property type="evidence" value="ECO:0000318"/>
    <property type="project" value="GO_Central"/>
</dbReference>
<dbReference type="GO" id="GO:0006891">
    <property type="term" value="P:intra-Golgi vesicle-mediated transport"/>
    <property type="evidence" value="ECO:0000318"/>
    <property type="project" value="GO_Central"/>
</dbReference>
<dbReference type="GO" id="GO:0015031">
    <property type="term" value="P:protein transport"/>
    <property type="evidence" value="ECO:0007669"/>
    <property type="project" value="UniProtKB-KW"/>
</dbReference>
<dbReference type="InterPro" id="IPR010490">
    <property type="entry name" value="COG6"/>
</dbReference>
<dbReference type="InterPro" id="IPR048369">
    <property type="entry name" value="COG6_C"/>
</dbReference>
<dbReference type="InterPro" id="IPR048368">
    <property type="entry name" value="COG6_N"/>
</dbReference>
<dbReference type="PANTHER" id="PTHR21506">
    <property type="entry name" value="COMPONENT OF OLIGOMERIC GOLGI COMPLEX 6"/>
    <property type="match status" value="1"/>
</dbReference>
<dbReference type="PANTHER" id="PTHR21506:SF0">
    <property type="entry name" value="CONSERVED OLIGOMERIC GOLGI COMPLEX SUBUNIT 6"/>
    <property type="match status" value="1"/>
</dbReference>
<dbReference type="Pfam" id="PF20653">
    <property type="entry name" value="COG6_C"/>
    <property type="match status" value="1"/>
</dbReference>
<dbReference type="Pfam" id="PF06419">
    <property type="entry name" value="COG6_N"/>
    <property type="match status" value="1"/>
</dbReference>
<dbReference type="SMART" id="SM01087">
    <property type="entry name" value="COG6"/>
    <property type="match status" value="1"/>
</dbReference>
<gene>
    <name type="primary">COG6</name>
    <name type="ORF">SNOG_03151</name>
</gene>
<keyword id="KW-0333">Golgi apparatus</keyword>
<keyword id="KW-0472">Membrane</keyword>
<keyword id="KW-0653">Protein transport</keyword>
<keyword id="KW-0813">Transport</keyword>
<accession>Q0UYL3</accession>